<protein>
    <recommendedName>
        <fullName>NAD(P)H-quinone oxidoreductase subunit 5, chloroplastic</fullName>
        <ecNumber>7.1.1.-</ecNumber>
    </recommendedName>
    <alternativeName>
        <fullName>NAD(P)H dehydrogenase subunit 5</fullName>
    </alternativeName>
    <alternativeName>
        <fullName>NADH-plastoquinone oxidoreductase subunit 5</fullName>
    </alternativeName>
</protein>
<dbReference type="EC" id="7.1.1.-"/>
<dbReference type="EMBL" id="EU549769">
    <property type="protein sequence ID" value="ACB86584.1"/>
    <property type="molecule type" value="Genomic_DNA"/>
</dbReference>
<dbReference type="RefSeq" id="YP_001837418.1">
    <property type="nucleotide sequence ID" value="NC_010601.1"/>
</dbReference>
<dbReference type="SMR" id="B2LMQ1"/>
<dbReference type="GeneID" id="6219197"/>
<dbReference type="GO" id="GO:0009535">
    <property type="term" value="C:chloroplast thylakoid membrane"/>
    <property type="evidence" value="ECO:0007669"/>
    <property type="project" value="UniProtKB-SubCell"/>
</dbReference>
<dbReference type="GO" id="GO:0008137">
    <property type="term" value="F:NADH dehydrogenase (ubiquinone) activity"/>
    <property type="evidence" value="ECO:0007669"/>
    <property type="project" value="InterPro"/>
</dbReference>
<dbReference type="GO" id="GO:0048038">
    <property type="term" value="F:quinone binding"/>
    <property type="evidence" value="ECO:0007669"/>
    <property type="project" value="UniProtKB-KW"/>
</dbReference>
<dbReference type="GO" id="GO:0042773">
    <property type="term" value="P:ATP synthesis coupled electron transport"/>
    <property type="evidence" value="ECO:0007669"/>
    <property type="project" value="InterPro"/>
</dbReference>
<dbReference type="GO" id="GO:0015990">
    <property type="term" value="P:electron transport coupled proton transport"/>
    <property type="evidence" value="ECO:0007669"/>
    <property type="project" value="TreeGrafter"/>
</dbReference>
<dbReference type="Gene3D" id="1.20.5.2700">
    <property type="match status" value="1"/>
</dbReference>
<dbReference type="InterPro" id="IPR002128">
    <property type="entry name" value="NADH_UbQ_OxRdtase_chlpt_su5_C"/>
</dbReference>
<dbReference type="InterPro" id="IPR018393">
    <property type="entry name" value="NADHpl_OxRdtase_5_subgr"/>
</dbReference>
<dbReference type="InterPro" id="IPR001750">
    <property type="entry name" value="ND/Mrp_TM"/>
</dbReference>
<dbReference type="InterPro" id="IPR003945">
    <property type="entry name" value="NU5C-like"/>
</dbReference>
<dbReference type="InterPro" id="IPR001516">
    <property type="entry name" value="Proton_antipo_N"/>
</dbReference>
<dbReference type="NCBIfam" id="TIGR01974">
    <property type="entry name" value="NDH_I_L"/>
    <property type="match status" value="1"/>
</dbReference>
<dbReference type="NCBIfam" id="NF005141">
    <property type="entry name" value="PRK06590.1"/>
    <property type="match status" value="1"/>
</dbReference>
<dbReference type="PANTHER" id="PTHR42829">
    <property type="entry name" value="NADH-UBIQUINONE OXIDOREDUCTASE CHAIN 5"/>
    <property type="match status" value="1"/>
</dbReference>
<dbReference type="PANTHER" id="PTHR42829:SF2">
    <property type="entry name" value="NADH-UBIQUINONE OXIDOREDUCTASE CHAIN 5"/>
    <property type="match status" value="1"/>
</dbReference>
<dbReference type="Pfam" id="PF01010">
    <property type="entry name" value="Proton_antipo_C"/>
    <property type="match status" value="1"/>
</dbReference>
<dbReference type="Pfam" id="PF00361">
    <property type="entry name" value="Proton_antipo_M"/>
    <property type="match status" value="1"/>
</dbReference>
<dbReference type="Pfam" id="PF00662">
    <property type="entry name" value="Proton_antipo_N"/>
    <property type="match status" value="1"/>
</dbReference>
<dbReference type="PRINTS" id="PR01434">
    <property type="entry name" value="NADHDHGNASE5"/>
</dbReference>
<dbReference type="PRINTS" id="PR01435">
    <property type="entry name" value="NPOXDRDTASE5"/>
</dbReference>
<reference key="1">
    <citation type="submission" date="2008-03" db="EMBL/GenBank/DDBJ databases">
        <title>Guizotia abyssinica chloroplast sequenced using Solexa.</title>
        <authorList>
            <person name="Kane N.C."/>
            <person name="Dempewolf H."/>
            <person name="Stewart M.L."/>
            <person name="Cronk Q."/>
            <person name="Rieseberrg L.H."/>
        </authorList>
    </citation>
    <scope>NUCLEOTIDE SEQUENCE [LARGE SCALE GENOMIC DNA]</scope>
    <source>
        <strain>cv. PI 508077</strain>
    </source>
</reference>
<sequence>MEQTYQYAWIIPFLPLPVPMLIGLGLLLFPTATKSLRRMWAFQSVLLLSIVMIFSMNLSIQQINSSSVYQYVWSWIINNDFSLEFGYLIDPLTSIMSILITTVGIMVLIYSDNYMSHDHGYLRFFAYMSFFSTSMLGLVTSSNLIQIYIFWELVGMCSYLLIGFWFTRPVAAKACQKAFVTNRVGDFGLLLGILGFYWITGSFEFRDLFQILNNLISNNEVNFVFVTLCAILLFAGAIAKSAQFPLHVWLPDAMEGPTPISALIHAATMVAAGIFPVARLMPLFIVIPHIMNFISLIGIITVFFGATLALAQKDIKRGLAYSTMSQLGYMMLALGMGSYRSALFHLITHAYSKALLFLGSGSVIHSMETLVGYCPKKSQNMVLMGGLTKHVPITKNSFLLGTLSLCGIPPLACFWSKDEILNDSWLYSPIFAIIAWSTAGLTAFYMCRIYLLTFEGHLNVHFQNYSGKRTTPLYSISLWGKEGSKISNKNFRLVTLLKMKKNGRPSFFSNKVYKMDENVINLIQPFLSIPNFGNTKTYLYPYESDNTMLFPILILILFTLFVGFLGIPFNQDVDILSKWLTPSINLLHQNSNNSIDWYEFCKDAVFSVSIAFFGIFIAFFLYKPVYSSFQNLDLINSFVKMGPKRIFSDKIKNAIYDWSYNRGYVDAFYGTFLTAGVRKLAEFTHFFDRRIIDGIPNGVGFLSFFVAEVIKSVGGGRISSYLFFYFSYVSIFLLIYYFLNL</sequence>
<comment type="function">
    <text evidence="1">NDH shuttles electrons from NAD(P)H:plastoquinone, via FMN and iron-sulfur (Fe-S) centers, to quinones in the photosynthetic chain and possibly in a chloroplast respiratory chain. The immediate electron acceptor for the enzyme in this species is believed to be plastoquinone. Couples the redox reaction to proton translocation, and thus conserves the redox energy in a proton gradient (By similarity).</text>
</comment>
<comment type="catalytic activity">
    <reaction>
        <text>a plastoquinone + NADH + (n+1) H(+)(in) = a plastoquinol + NAD(+) + n H(+)(out)</text>
        <dbReference type="Rhea" id="RHEA:42608"/>
        <dbReference type="Rhea" id="RHEA-COMP:9561"/>
        <dbReference type="Rhea" id="RHEA-COMP:9562"/>
        <dbReference type="ChEBI" id="CHEBI:15378"/>
        <dbReference type="ChEBI" id="CHEBI:17757"/>
        <dbReference type="ChEBI" id="CHEBI:57540"/>
        <dbReference type="ChEBI" id="CHEBI:57945"/>
        <dbReference type="ChEBI" id="CHEBI:62192"/>
    </reaction>
</comment>
<comment type="catalytic activity">
    <reaction>
        <text>a plastoquinone + NADPH + (n+1) H(+)(in) = a plastoquinol + NADP(+) + n H(+)(out)</text>
        <dbReference type="Rhea" id="RHEA:42612"/>
        <dbReference type="Rhea" id="RHEA-COMP:9561"/>
        <dbReference type="Rhea" id="RHEA-COMP:9562"/>
        <dbReference type="ChEBI" id="CHEBI:15378"/>
        <dbReference type="ChEBI" id="CHEBI:17757"/>
        <dbReference type="ChEBI" id="CHEBI:57783"/>
        <dbReference type="ChEBI" id="CHEBI:58349"/>
        <dbReference type="ChEBI" id="CHEBI:62192"/>
    </reaction>
</comment>
<comment type="subunit">
    <text evidence="1">NDH is composed of at least 16 different subunits, 5 of which are encoded in the nucleus.</text>
</comment>
<comment type="subcellular location">
    <subcellularLocation>
        <location evidence="1">Plastid</location>
        <location evidence="1">Chloroplast thylakoid membrane</location>
        <topology evidence="1">Multi-pass membrane protein</topology>
    </subcellularLocation>
</comment>
<comment type="similarity">
    <text evidence="3">Belongs to the complex I subunit 5 family.</text>
</comment>
<keyword id="KW-0150">Chloroplast</keyword>
<keyword id="KW-0472">Membrane</keyword>
<keyword id="KW-0520">NAD</keyword>
<keyword id="KW-0521">NADP</keyword>
<keyword id="KW-0934">Plastid</keyword>
<keyword id="KW-0618">Plastoquinone</keyword>
<keyword id="KW-0874">Quinone</keyword>
<keyword id="KW-0793">Thylakoid</keyword>
<keyword id="KW-1278">Translocase</keyword>
<keyword id="KW-0812">Transmembrane</keyword>
<keyword id="KW-1133">Transmembrane helix</keyword>
<keyword id="KW-0813">Transport</keyword>
<feature type="chain" id="PRO_0000360938" description="NAD(P)H-quinone oxidoreductase subunit 5, chloroplastic">
    <location>
        <begin position="1"/>
        <end position="741"/>
    </location>
</feature>
<feature type="transmembrane region" description="Helical" evidence="2">
    <location>
        <begin position="9"/>
        <end position="29"/>
    </location>
</feature>
<feature type="transmembrane region" description="Helical" evidence="2">
    <location>
        <begin position="40"/>
        <end position="60"/>
    </location>
</feature>
<feature type="transmembrane region" description="Helical" evidence="2">
    <location>
        <begin position="89"/>
        <end position="109"/>
    </location>
</feature>
<feature type="transmembrane region" description="Helical" evidence="2">
    <location>
        <begin position="125"/>
        <end position="145"/>
    </location>
</feature>
<feature type="transmembrane region" description="Helical" evidence="2">
    <location>
        <begin position="147"/>
        <end position="167"/>
    </location>
</feature>
<feature type="transmembrane region" description="Helical" evidence="2">
    <location>
        <begin position="185"/>
        <end position="205"/>
    </location>
</feature>
<feature type="transmembrane region" description="Helical" evidence="2">
    <location>
        <begin position="219"/>
        <end position="239"/>
    </location>
</feature>
<feature type="transmembrane region" description="Helical" evidence="2">
    <location>
        <begin position="258"/>
        <end position="278"/>
    </location>
</feature>
<feature type="transmembrane region" description="Helical" evidence="2">
    <location>
        <begin position="284"/>
        <end position="304"/>
    </location>
</feature>
<feature type="transmembrane region" description="Helical" evidence="2">
    <location>
        <begin position="327"/>
        <end position="347"/>
    </location>
</feature>
<feature type="transmembrane region" description="Helical" evidence="2">
    <location>
        <begin position="354"/>
        <end position="374"/>
    </location>
</feature>
<feature type="transmembrane region" description="Helical" evidence="2">
    <location>
        <begin position="396"/>
        <end position="416"/>
    </location>
</feature>
<feature type="transmembrane region" description="Helical" evidence="2">
    <location>
        <begin position="425"/>
        <end position="445"/>
    </location>
</feature>
<feature type="transmembrane region" description="Helical" evidence="2">
    <location>
        <begin position="549"/>
        <end position="569"/>
    </location>
</feature>
<feature type="transmembrane region" description="Helical" evidence="2">
    <location>
        <begin position="605"/>
        <end position="625"/>
    </location>
</feature>
<feature type="transmembrane region" description="Helical" evidence="2">
    <location>
        <begin position="721"/>
        <end position="741"/>
    </location>
</feature>
<gene>
    <name type="primary">ndhF</name>
    <name type="ordered locus">GuabCp080</name>
</gene>
<geneLocation type="chloroplast"/>
<name>NU5C_GUIAB</name>
<proteinExistence type="inferred from homology"/>
<accession>B2LMQ1</accession>
<organism>
    <name type="scientific">Guizotia abyssinica</name>
    <name type="common">Niger</name>
    <name type="synonym">Ramtilla</name>
    <dbReference type="NCBI Taxonomy" id="4230"/>
    <lineage>
        <taxon>Eukaryota</taxon>
        <taxon>Viridiplantae</taxon>
        <taxon>Streptophyta</taxon>
        <taxon>Embryophyta</taxon>
        <taxon>Tracheophyta</taxon>
        <taxon>Spermatophyta</taxon>
        <taxon>Magnoliopsida</taxon>
        <taxon>eudicotyledons</taxon>
        <taxon>Gunneridae</taxon>
        <taxon>Pentapetalae</taxon>
        <taxon>asterids</taxon>
        <taxon>campanulids</taxon>
        <taxon>Asterales</taxon>
        <taxon>Asteraceae</taxon>
        <taxon>Asteroideae</taxon>
        <taxon>Heliantheae alliance</taxon>
        <taxon>Millerieae</taxon>
        <taxon>Guizotia</taxon>
    </lineage>
</organism>
<evidence type="ECO:0000250" key="1"/>
<evidence type="ECO:0000255" key="2"/>
<evidence type="ECO:0000305" key="3"/>